<dbReference type="EC" id="2.3.1.234" evidence="1"/>
<dbReference type="EMBL" id="CP000947">
    <property type="protein sequence ID" value="ACA32403.1"/>
    <property type="molecule type" value="Genomic_DNA"/>
</dbReference>
<dbReference type="RefSeq" id="WP_012341562.1">
    <property type="nucleotide sequence ID" value="NC_010519.1"/>
</dbReference>
<dbReference type="SMR" id="B0USH5"/>
<dbReference type="STRING" id="228400.HSM_0736"/>
<dbReference type="GeneID" id="31487022"/>
<dbReference type="KEGG" id="hsm:HSM_0736"/>
<dbReference type="HOGENOM" id="CLU_023208_0_0_6"/>
<dbReference type="GO" id="GO:0005737">
    <property type="term" value="C:cytoplasm"/>
    <property type="evidence" value="ECO:0007669"/>
    <property type="project" value="UniProtKB-SubCell"/>
</dbReference>
<dbReference type="GO" id="GO:0005506">
    <property type="term" value="F:iron ion binding"/>
    <property type="evidence" value="ECO:0007669"/>
    <property type="project" value="UniProtKB-UniRule"/>
</dbReference>
<dbReference type="GO" id="GO:0061711">
    <property type="term" value="F:N(6)-L-threonylcarbamoyladenine synthase activity"/>
    <property type="evidence" value="ECO:0007669"/>
    <property type="project" value="UniProtKB-EC"/>
</dbReference>
<dbReference type="GO" id="GO:0002949">
    <property type="term" value="P:tRNA threonylcarbamoyladenosine modification"/>
    <property type="evidence" value="ECO:0007669"/>
    <property type="project" value="UniProtKB-UniRule"/>
</dbReference>
<dbReference type="CDD" id="cd24133">
    <property type="entry name" value="ASKHA_NBD_TsaD_bac"/>
    <property type="match status" value="1"/>
</dbReference>
<dbReference type="FunFam" id="3.30.420.40:FF:000012">
    <property type="entry name" value="tRNA N6-adenosine threonylcarbamoyltransferase"/>
    <property type="match status" value="1"/>
</dbReference>
<dbReference type="FunFam" id="3.30.420.40:FF:000031">
    <property type="entry name" value="tRNA N6-adenosine threonylcarbamoyltransferase"/>
    <property type="match status" value="1"/>
</dbReference>
<dbReference type="Gene3D" id="3.30.420.40">
    <property type="match status" value="2"/>
</dbReference>
<dbReference type="HAMAP" id="MF_01445">
    <property type="entry name" value="TsaD"/>
    <property type="match status" value="1"/>
</dbReference>
<dbReference type="InterPro" id="IPR043129">
    <property type="entry name" value="ATPase_NBD"/>
</dbReference>
<dbReference type="InterPro" id="IPR000905">
    <property type="entry name" value="Gcp-like_dom"/>
</dbReference>
<dbReference type="InterPro" id="IPR017861">
    <property type="entry name" value="KAE1/TsaD"/>
</dbReference>
<dbReference type="InterPro" id="IPR022450">
    <property type="entry name" value="TsaD"/>
</dbReference>
<dbReference type="NCBIfam" id="TIGR00329">
    <property type="entry name" value="gcp_kae1"/>
    <property type="match status" value="1"/>
</dbReference>
<dbReference type="NCBIfam" id="TIGR03723">
    <property type="entry name" value="T6A_TsaD_YgjD"/>
    <property type="match status" value="1"/>
</dbReference>
<dbReference type="PANTHER" id="PTHR11735">
    <property type="entry name" value="TRNA N6-ADENOSINE THREONYLCARBAMOYLTRANSFERASE"/>
    <property type="match status" value="1"/>
</dbReference>
<dbReference type="PANTHER" id="PTHR11735:SF6">
    <property type="entry name" value="TRNA N6-ADENOSINE THREONYLCARBAMOYLTRANSFERASE, MITOCHONDRIAL"/>
    <property type="match status" value="1"/>
</dbReference>
<dbReference type="Pfam" id="PF00814">
    <property type="entry name" value="TsaD"/>
    <property type="match status" value="1"/>
</dbReference>
<dbReference type="PRINTS" id="PR00789">
    <property type="entry name" value="OSIALOPTASE"/>
</dbReference>
<dbReference type="SUPFAM" id="SSF53067">
    <property type="entry name" value="Actin-like ATPase domain"/>
    <property type="match status" value="1"/>
</dbReference>
<comment type="function">
    <text evidence="1">Required for the formation of a threonylcarbamoyl group on adenosine at position 37 (t(6)A37) in tRNAs that read codons beginning with adenine. Is involved in the transfer of the threonylcarbamoyl moiety of threonylcarbamoyl-AMP (TC-AMP) to the N6 group of A37, together with TsaE and TsaB. TsaD likely plays a direct catalytic role in this reaction.</text>
</comment>
<comment type="catalytic activity">
    <reaction evidence="1">
        <text>L-threonylcarbamoyladenylate + adenosine(37) in tRNA = N(6)-L-threonylcarbamoyladenosine(37) in tRNA + AMP + H(+)</text>
        <dbReference type="Rhea" id="RHEA:37059"/>
        <dbReference type="Rhea" id="RHEA-COMP:10162"/>
        <dbReference type="Rhea" id="RHEA-COMP:10163"/>
        <dbReference type="ChEBI" id="CHEBI:15378"/>
        <dbReference type="ChEBI" id="CHEBI:73682"/>
        <dbReference type="ChEBI" id="CHEBI:74411"/>
        <dbReference type="ChEBI" id="CHEBI:74418"/>
        <dbReference type="ChEBI" id="CHEBI:456215"/>
        <dbReference type="EC" id="2.3.1.234"/>
    </reaction>
</comment>
<comment type="cofactor">
    <cofactor evidence="1">
        <name>Fe(2+)</name>
        <dbReference type="ChEBI" id="CHEBI:29033"/>
    </cofactor>
    <text evidence="1">Binds 1 Fe(2+) ion per subunit.</text>
</comment>
<comment type="subcellular location">
    <subcellularLocation>
        <location evidence="1">Cytoplasm</location>
    </subcellularLocation>
</comment>
<comment type="similarity">
    <text evidence="1">Belongs to the KAE1 / TsaD family.</text>
</comment>
<protein>
    <recommendedName>
        <fullName evidence="1">tRNA N6-adenosine threonylcarbamoyltransferase</fullName>
        <ecNumber evidence="1">2.3.1.234</ecNumber>
    </recommendedName>
    <alternativeName>
        <fullName evidence="1">N6-L-threonylcarbamoyladenine synthase</fullName>
        <shortName evidence="1">t(6)A synthase</shortName>
    </alternativeName>
    <alternativeName>
        <fullName evidence="1">t(6)A37 threonylcarbamoyladenosine biosynthesis protein TsaD</fullName>
    </alternativeName>
    <alternativeName>
        <fullName evidence="1">tRNA threonylcarbamoyladenosine biosynthesis protein TsaD</fullName>
    </alternativeName>
</protein>
<accession>B0USH5</accession>
<name>TSAD_HISS2</name>
<keyword id="KW-0012">Acyltransferase</keyword>
<keyword id="KW-0963">Cytoplasm</keyword>
<keyword id="KW-0408">Iron</keyword>
<keyword id="KW-0479">Metal-binding</keyword>
<keyword id="KW-0808">Transferase</keyword>
<keyword id="KW-0819">tRNA processing</keyword>
<evidence type="ECO:0000255" key="1">
    <source>
        <dbReference type="HAMAP-Rule" id="MF_01445"/>
    </source>
</evidence>
<proteinExistence type="inferred from homology"/>
<reference key="1">
    <citation type="submission" date="2008-02" db="EMBL/GenBank/DDBJ databases">
        <title>Complete sequence of Haemophilus somnus 2336.</title>
        <authorList>
            <consortium name="US DOE Joint Genome Institute"/>
            <person name="Siddaramappa S."/>
            <person name="Duncan A.J."/>
            <person name="Challacombe J.F."/>
            <person name="Rainey D."/>
            <person name="Gillaspy A.F."/>
            <person name="Carson M."/>
            <person name="Gipson J."/>
            <person name="Gipson M."/>
            <person name="Bruce D."/>
            <person name="Detter J.C."/>
            <person name="Han C.S."/>
            <person name="Land M."/>
            <person name="Tapia R."/>
            <person name="Thompson L.S."/>
            <person name="Orvis J."/>
            <person name="Zaitshik J."/>
            <person name="Barnes G."/>
            <person name="Brettin T.S."/>
            <person name="Dyer D.W."/>
            <person name="Inzana T.J."/>
        </authorList>
    </citation>
    <scope>NUCLEOTIDE SEQUENCE [LARGE SCALE GENOMIC DNA]</scope>
    <source>
        <strain>2336</strain>
    </source>
</reference>
<organism>
    <name type="scientific">Histophilus somni (strain 2336)</name>
    <name type="common">Haemophilus somnus</name>
    <dbReference type="NCBI Taxonomy" id="228400"/>
    <lineage>
        <taxon>Bacteria</taxon>
        <taxon>Pseudomonadati</taxon>
        <taxon>Pseudomonadota</taxon>
        <taxon>Gammaproteobacteria</taxon>
        <taxon>Pasteurellales</taxon>
        <taxon>Pasteurellaceae</taxon>
        <taxon>Histophilus</taxon>
    </lineage>
</organism>
<gene>
    <name evidence="1" type="primary">tsaD</name>
    <name type="synonym">gcp</name>
    <name type="ordered locus">HSM_0736</name>
</gene>
<sequence>MRILGIETSCDETGVAIYDEEKGLIANQLYTQIALHADYGGVVPELASRDHIRKTAPLIQAALQQAGLEAKDIDGIAYTCGPGLVGALLVGSTIARSLAYAWNIKAIGVHHMEGHLLAPMLENNPPKFPFVALLVSGGHTQLVRVNAVGQYELLGESIDDAAGEAFDKTAKLLGLDYPGGSVLSRLAEQGNPERFFFPRPMTDRPGLDFSFSGLKTFAANTINQAIKQEGELTEQTKADIAYAFQQAVVDTLAIKCRRALKETGFKRLVIAGGVSANKQLRQSLADMMKQLKGEVFYPQPQFCTDNGAMIAYVGFLRLKQGEYSPLEIDVKPRWAMTELKAI</sequence>
<feature type="chain" id="PRO_1000087477" description="tRNA N6-adenosine threonylcarbamoyltransferase">
    <location>
        <begin position="1"/>
        <end position="342"/>
    </location>
</feature>
<feature type="binding site" evidence="1">
    <location>
        <position position="111"/>
    </location>
    <ligand>
        <name>Fe cation</name>
        <dbReference type="ChEBI" id="CHEBI:24875"/>
    </ligand>
</feature>
<feature type="binding site" evidence="1">
    <location>
        <position position="115"/>
    </location>
    <ligand>
        <name>Fe cation</name>
        <dbReference type="ChEBI" id="CHEBI:24875"/>
    </ligand>
</feature>
<feature type="binding site" evidence="1">
    <location>
        <begin position="134"/>
        <end position="138"/>
    </location>
    <ligand>
        <name>substrate</name>
    </ligand>
</feature>
<feature type="binding site" evidence="1">
    <location>
        <position position="167"/>
    </location>
    <ligand>
        <name>substrate</name>
    </ligand>
</feature>
<feature type="binding site" evidence="1">
    <location>
        <position position="180"/>
    </location>
    <ligand>
        <name>substrate</name>
    </ligand>
</feature>
<feature type="binding site" evidence="1">
    <location>
        <position position="277"/>
    </location>
    <ligand>
        <name>substrate</name>
    </ligand>
</feature>
<feature type="binding site" evidence="1">
    <location>
        <position position="305"/>
    </location>
    <ligand>
        <name>Fe cation</name>
        <dbReference type="ChEBI" id="CHEBI:24875"/>
    </ligand>
</feature>